<proteinExistence type="inferred from homology"/>
<gene>
    <name evidence="1" type="primary">mraY</name>
    <name type="ordered locus">CD630_26540</name>
</gene>
<sequence>MMLGITELTYTALIAFLIVIIIGPIFIPMLRKFKFGQTVRDDGPQTHLAKNGTPTMGGIIMIVAILITGLTRVKVSHDMAVGLICIAGFGFIGFLDDFIKIKLKRSLGLKAYQKIILQVALSFYVAFYQYTSSSSASQLMIPFTDFVINVGILYIPIMMFIIVAIVNAVNLTDGLDGLASGVTLIVSVFFMLFASSIAGNTEVAVLAAATVGACLGFLGFNSYPARVFMGDTGSMALGGAVVAFSVLTNSVLIIPIIGGIYFAEALSVLIQVGYFKATRKRFFKMAPIHHHFEQCGWPETRVVFIFWIITVVLAWISIIAVF</sequence>
<name>MRAY_CLOD6</name>
<evidence type="ECO:0000255" key="1">
    <source>
        <dbReference type="HAMAP-Rule" id="MF_00038"/>
    </source>
</evidence>
<keyword id="KW-0131">Cell cycle</keyword>
<keyword id="KW-0132">Cell division</keyword>
<keyword id="KW-1003">Cell membrane</keyword>
<keyword id="KW-0133">Cell shape</keyword>
<keyword id="KW-0961">Cell wall biogenesis/degradation</keyword>
<keyword id="KW-0460">Magnesium</keyword>
<keyword id="KW-0472">Membrane</keyword>
<keyword id="KW-0479">Metal-binding</keyword>
<keyword id="KW-0573">Peptidoglycan synthesis</keyword>
<keyword id="KW-1185">Reference proteome</keyword>
<keyword id="KW-0808">Transferase</keyword>
<keyword id="KW-0812">Transmembrane</keyword>
<keyword id="KW-1133">Transmembrane helix</keyword>
<dbReference type="EC" id="2.7.8.13" evidence="1"/>
<dbReference type="EMBL" id="AM180355">
    <property type="protein sequence ID" value="CAJ69540.1"/>
    <property type="molecule type" value="Genomic_DNA"/>
</dbReference>
<dbReference type="RefSeq" id="WP_003427000.1">
    <property type="nucleotide sequence ID" value="NZ_JAUPES010000012.1"/>
</dbReference>
<dbReference type="RefSeq" id="YP_001089165.1">
    <property type="nucleotide sequence ID" value="NC_009089.1"/>
</dbReference>
<dbReference type="SMR" id="Q182Y8"/>
<dbReference type="STRING" id="272563.CD630_26540"/>
<dbReference type="EnsemblBacteria" id="CAJ69540">
    <property type="protein sequence ID" value="CAJ69540"/>
    <property type="gene ID" value="CD630_26540"/>
</dbReference>
<dbReference type="GeneID" id="66355056"/>
<dbReference type="KEGG" id="cdf:CD630_26540"/>
<dbReference type="PATRIC" id="fig|272563.8.peg.2778"/>
<dbReference type="eggNOG" id="COG0472">
    <property type="taxonomic scope" value="Bacteria"/>
</dbReference>
<dbReference type="OrthoDB" id="9805475at2"/>
<dbReference type="PhylomeDB" id="Q182Y8"/>
<dbReference type="BioCyc" id="PDIF272563:G12WB-2805-MONOMER"/>
<dbReference type="UniPathway" id="UPA00219"/>
<dbReference type="Proteomes" id="UP000001978">
    <property type="component" value="Chromosome"/>
</dbReference>
<dbReference type="GO" id="GO:0005886">
    <property type="term" value="C:plasma membrane"/>
    <property type="evidence" value="ECO:0007669"/>
    <property type="project" value="UniProtKB-SubCell"/>
</dbReference>
<dbReference type="GO" id="GO:0046872">
    <property type="term" value="F:metal ion binding"/>
    <property type="evidence" value="ECO:0007669"/>
    <property type="project" value="UniProtKB-KW"/>
</dbReference>
<dbReference type="GO" id="GO:0008963">
    <property type="term" value="F:phospho-N-acetylmuramoyl-pentapeptide-transferase activity"/>
    <property type="evidence" value="ECO:0007669"/>
    <property type="project" value="UniProtKB-UniRule"/>
</dbReference>
<dbReference type="GO" id="GO:0051992">
    <property type="term" value="F:UDP-N-acetylmuramoyl-L-alanyl-D-glutamyl-meso-2,6-diaminopimelyl-D-alanyl-D-alanine:undecaprenyl-phosphate transferase activity"/>
    <property type="evidence" value="ECO:0007669"/>
    <property type="project" value="RHEA"/>
</dbReference>
<dbReference type="GO" id="GO:0051301">
    <property type="term" value="P:cell division"/>
    <property type="evidence" value="ECO:0007669"/>
    <property type="project" value="UniProtKB-KW"/>
</dbReference>
<dbReference type="GO" id="GO:0071555">
    <property type="term" value="P:cell wall organization"/>
    <property type="evidence" value="ECO:0007669"/>
    <property type="project" value="UniProtKB-KW"/>
</dbReference>
<dbReference type="GO" id="GO:0009252">
    <property type="term" value="P:peptidoglycan biosynthetic process"/>
    <property type="evidence" value="ECO:0007669"/>
    <property type="project" value="UniProtKB-UniRule"/>
</dbReference>
<dbReference type="GO" id="GO:0008360">
    <property type="term" value="P:regulation of cell shape"/>
    <property type="evidence" value="ECO:0007669"/>
    <property type="project" value="UniProtKB-KW"/>
</dbReference>
<dbReference type="CDD" id="cd06852">
    <property type="entry name" value="GT_MraY"/>
    <property type="match status" value="1"/>
</dbReference>
<dbReference type="HAMAP" id="MF_00038">
    <property type="entry name" value="MraY"/>
    <property type="match status" value="1"/>
</dbReference>
<dbReference type="InterPro" id="IPR000715">
    <property type="entry name" value="Glycosyl_transferase_4"/>
</dbReference>
<dbReference type="InterPro" id="IPR003524">
    <property type="entry name" value="PNAcMuramoyl-5peptid_Trfase"/>
</dbReference>
<dbReference type="InterPro" id="IPR018480">
    <property type="entry name" value="PNAcMuramoyl-5peptid_Trfase_CS"/>
</dbReference>
<dbReference type="NCBIfam" id="TIGR00445">
    <property type="entry name" value="mraY"/>
    <property type="match status" value="1"/>
</dbReference>
<dbReference type="PANTHER" id="PTHR22926">
    <property type="entry name" value="PHOSPHO-N-ACETYLMURAMOYL-PENTAPEPTIDE-TRANSFERASE"/>
    <property type="match status" value="1"/>
</dbReference>
<dbReference type="PANTHER" id="PTHR22926:SF5">
    <property type="entry name" value="PHOSPHO-N-ACETYLMURAMOYL-PENTAPEPTIDE-TRANSFERASE HOMOLOG"/>
    <property type="match status" value="1"/>
</dbReference>
<dbReference type="Pfam" id="PF00953">
    <property type="entry name" value="Glycos_transf_4"/>
    <property type="match status" value="1"/>
</dbReference>
<dbReference type="Pfam" id="PF10555">
    <property type="entry name" value="MraY_sig1"/>
    <property type="match status" value="1"/>
</dbReference>
<dbReference type="PROSITE" id="PS01347">
    <property type="entry name" value="MRAY_1"/>
    <property type="match status" value="1"/>
</dbReference>
<dbReference type="PROSITE" id="PS01348">
    <property type="entry name" value="MRAY_2"/>
    <property type="match status" value="1"/>
</dbReference>
<organism>
    <name type="scientific">Clostridioides difficile (strain 630)</name>
    <name type="common">Peptoclostridium difficile</name>
    <dbReference type="NCBI Taxonomy" id="272563"/>
    <lineage>
        <taxon>Bacteria</taxon>
        <taxon>Bacillati</taxon>
        <taxon>Bacillota</taxon>
        <taxon>Clostridia</taxon>
        <taxon>Peptostreptococcales</taxon>
        <taxon>Peptostreptococcaceae</taxon>
        <taxon>Clostridioides</taxon>
    </lineage>
</organism>
<comment type="function">
    <text evidence="1">Catalyzes the initial step of the lipid cycle reactions in the biosynthesis of the cell wall peptidoglycan: transfers peptidoglycan precursor phospho-MurNAc-pentapeptide from UDP-MurNAc-pentapeptide onto the lipid carrier undecaprenyl phosphate, yielding undecaprenyl-pyrophosphoryl-MurNAc-pentapeptide, known as lipid I.</text>
</comment>
<comment type="catalytic activity">
    <reaction evidence="1">
        <text>UDP-N-acetyl-alpha-D-muramoyl-L-alanyl-gamma-D-glutamyl-meso-2,6-diaminopimeloyl-D-alanyl-D-alanine + di-trans,octa-cis-undecaprenyl phosphate = di-trans,octa-cis-undecaprenyl diphospho-N-acetyl-alpha-D-muramoyl-L-alanyl-D-glutamyl-meso-2,6-diaminopimeloyl-D-alanyl-D-alanine + UMP</text>
        <dbReference type="Rhea" id="RHEA:28386"/>
        <dbReference type="ChEBI" id="CHEBI:57865"/>
        <dbReference type="ChEBI" id="CHEBI:60392"/>
        <dbReference type="ChEBI" id="CHEBI:61386"/>
        <dbReference type="ChEBI" id="CHEBI:61387"/>
        <dbReference type="EC" id="2.7.8.13"/>
    </reaction>
</comment>
<comment type="cofactor">
    <cofactor evidence="1">
        <name>Mg(2+)</name>
        <dbReference type="ChEBI" id="CHEBI:18420"/>
    </cofactor>
</comment>
<comment type="pathway">
    <text evidence="1">Cell wall biogenesis; peptidoglycan biosynthesis.</text>
</comment>
<comment type="subcellular location">
    <subcellularLocation>
        <location evidence="1">Cell membrane</location>
        <topology evidence="1">Multi-pass membrane protein</topology>
    </subcellularLocation>
</comment>
<comment type="similarity">
    <text evidence="1">Belongs to the glycosyltransferase 4 family. MraY subfamily.</text>
</comment>
<accession>Q182Y8</accession>
<protein>
    <recommendedName>
        <fullName evidence="1">Phospho-N-acetylmuramoyl-pentapeptide-transferase</fullName>
        <ecNumber evidence="1">2.7.8.13</ecNumber>
    </recommendedName>
    <alternativeName>
        <fullName evidence="1">UDP-MurNAc-pentapeptide phosphotransferase</fullName>
    </alternativeName>
</protein>
<reference key="1">
    <citation type="journal article" date="2006" name="Nat. Genet.">
        <title>The multidrug-resistant human pathogen Clostridium difficile has a highly mobile, mosaic genome.</title>
        <authorList>
            <person name="Sebaihia M."/>
            <person name="Wren B.W."/>
            <person name="Mullany P."/>
            <person name="Fairweather N.F."/>
            <person name="Minton N."/>
            <person name="Stabler R."/>
            <person name="Thomson N.R."/>
            <person name="Roberts A.P."/>
            <person name="Cerdeno-Tarraga A.M."/>
            <person name="Wang H."/>
            <person name="Holden M.T.G."/>
            <person name="Wright A."/>
            <person name="Churcher C."/>
            <person name="Quail M.A."/>
            <person name="Baker S."/>
            <person name="Bason N."/>
            <person name="Brooks K."/>
            <person name="Chillingworth T."/>
            <person name="Cronin A."/>
            <person name="Davis P."/>
            <person name="Dowd L."/>
            <person name="Fraser A."/>
            <person name="Feltwell T."/>
            <person name="Hance Z."/>
            <person name="Holroyd S."/>
            <person name="Jagels K."/>
            <person name="Moule S."/>
            <person name="Mungall K."/>
            <person name="Price C."/>
            <person name="Rabbinowitsch E."/>
            <person name="Sharp S."/>
            <person name="Simmonds M."/>
            <person name="Stevens K."/>
            <person name="Unwin L."/>
            <person name="Whithead S."/>
            <person name="Dupuy B."/>
            <person name="Dougan G."/>
            <person name="Barrell B."/>
            <person name="Parkhill J."/>
        </authorList>
    </citation>
    <scope>NUCLEOTIDE SEQUENCE [LARGE SCALE GENOMIC DNA]</scope>
    <source>
        <strain>630</strain>
    </source>
</reference>
<feature type="chain" id="PRO_0000332530" description="Phospho-N-acetylmuramoyl-pentapeptide-transferase">
    <location>
        <begin position="1"/>
        <end position="322"/>
    </location>
</feature>
<feature type="transmembrane region" description="Helical" evidence="1">
    <location>
        <begin position="10"/>
        <end position="30"/>
    </location>
</feature>
<feature type="transmembrane region" description="Helical" evidence="1">
    <location>
        <begin position="51"/>
        <end position="71"/>
    </location>
</feature>
<feature type="transmembrane region" description="Helical" evidence="1">
    <location>
        <begin position="79"/>
        <end position="99"/>
    </location>
</feature>
<feature type="transmembrane region" description="Helical" evidence="1">
    <location>
        <begin position="107"/>
        <end position="127"/>
    </location>
</feature>
<feature type="transmembrane region" description="Helical" evidence="1">
    <location>
        <begin position="146"/>
        <end position="166"/>
    </location>
</feature>
<feature type="transmembrane region" description="Helical" evidence="1">
    <location>
        <begin position="178"/>
        <end position="198"/>
    </location>
</feature>
<feature type="transmembrane region" description="Helical" evidence="1">
    <location>
        <begin position="203"/>
        <end position="223"/>
    </location>
</feature>
<feature type="transmembrane region" description="Helical" evidence="1">
    <location>
        <begin position="227"/>
        <end position="247"/>
    </location>
</feature>
<feature type="transmembrane region" description="Helical" evidence="1">
    <location>
        <begin position="250"/>
        <end position="270"/>
    </location>
</feature>
<feature type="transmembrane region" description="Helical" evidence="1">
    <location>
        <begin position="302"/>
        <end position="322"/>
    </location>
</feature>